<protein>
    <recommendedName>
        <fullName evidence="1">Small ribosomal subunit protein uS19</fullName>
    </recommendedName>
    <alternativeName>
        <fullName evidence="2">30S ribosomal protein S19</fullName>
    </alternativeName>
</protein>
<feature type="chain" id="PRO_0000129795" description="Small ribosomal subunit protein uS19">
    <location>
        <begin position="1"/>
        <end position="92"/>
    </location>
</feature>
<evidence type="ECO:0000255" key="1">
    <source>
        <dbReference type="HAMAP-Rule" id="MF_00531"/>
    </source>
</evidence>
<evidence type="ECO:0000305" key="2"/>
<accession>Q8K954</accession>
<sequence length="92" mass="10592">MPRSLKKGPFIDVSLLKKVEKAVKINDKKPLKTWSRRSTVFPNMVGLTISVHNGRHHIPIFITEEMVGHKLGEFSLTRTYRGHTADKKVKKR</sequence>
<comment type="function">
    <text evidence="1">Protein S19 forms a complex with S13 that binds strongly to the 16S ribosomal RNA.</text>
</comment>
<comment type="similarity">
    <text evidence="1">Belongs to the universal ribosomal protein uS19 family.</text>
</comment>
<name>RS19_BUCAP</name>
<reference key="1">
    <citation type="journal article" date="2002" name="Science">
        <title>50 million years of genomic stasis in endosymbiotic bacteria.</title>
        <authorList>
            <person name="Tamas I."/>
            <person name="Klasson L."/>
            <person name="Canbaeck B."/>
            <person name="Naeslund A.K."/>
            <person name="Eriksson A.-S."/>
            <person name="Wernegreen J.J."/>
            <person name="Sandstroem J.P."/>
            <person name="Moran N.A."/>
            <person name="Andersson S.G.E."/>
        </authorList>
    </citation>
    <scope>NUCLEOTIDE SEQUENCE [LARGE SCALE GENOMIC DNA]</scope>
    <source>
        <strain>Sg</strain>
    </source>
</reference>
<dbReference type="EMBL" id="AE013218">
    <property type="protein sequence ID" value="AAM68044.1"/>
    <property type="molecule type" value="Genomic_DNA"/>
</dbReference>
<dbReference type="RefSeq" id="WP_011054010.1">
    <property type="nucleotide sequence ID" value="NC_004061.1"/>
</dbReference>
<dbReference type="SMR" id="Q8K954"/>
<dbReference type="STRING" id="198804.BUsg_501"/>
<dbReference type="GeneID" id="93003976"/>
<dbReference type="KEGG" id="bas:BUsg_501"/>
<dbReference type="eggNOG" id="COG0185">
    <property type="taxonomic scope" value="Bacteria"/>
</dbReference>
<dbReference type="HOGENOM" id="CLU_144911_0_1_6"/>
<dbReference type="Proteomes" id="UP000000416">
    <property type="component" value="Chromosome"/>
</dbReference>
<dbReference type="GO" id="GO:0005737">
    <property type="term" value="C:cytoplasm"/>
    <property type="evidence" value="ECO:0007669"/>
    <property type="project" value="UniProtKB-ARBA"/>
</dbReference>
<dbReference type="GO" id="GO:0015935">
    <property type="term" value="C:small ribosomal subunit"/>
    <property type="evidence" value="ECO:0007669"/>
    <property type="project" value="InterPro"/>
</dbReference>
<dbReference type="GO" id="GO:0019843">
    <property type="term" value="F:rRNA binding"/>
    <property type="evidence" value="ECO:0007669"/>
    <property type="project" value="UniProtKB-UniRule"/>
</dbReference>
<dbReference type="GO" id="GO:0003735">
    <property type="term" value="F:structural constituent of ribosome"/>
    <property type="evidence" value="ECO:0007669"/>
    <property type="project" value="InterPro"/>
</dbReference>
<dbReference type="GO" id="GO:0000028">
    <property type="term" value="P:ribosomal small subunit assembly"/>
    <property type="evidence" value="ECO:0007669"/>
    <property type="project" value="TreeGrafter"/>
</dbReference>
<dbReference type="GO" id="GO:0006412">
    <property type="term" value="P:translation"/>
    <property type="evidence" value="ECO:0007669"/>
    <property type="project" value="UniProtKB-UniRule"/>
</dbReference>
<dbReference type="FunFam" id="3.30.860.10:FF:000001">
    <property type="entry name" value="30S ribosomal protein S19"/>
    <property type="match status" value="1"/>
</dbReference>
<dbReference type="Gene3D" id="3.30.860.10">
    <property type="entry name" value="30s Ribosomal Protein S19, Chain A"/>
    <property type="match status" value="1"/>
</dbReference>
<dbReference type="HAMAP" id="MF_00531">
    <property type="entry name" value="Ribosomal_uS19"/>
    <property type="match status" value="1"/>
</dbReference>
<dbReference type="InterPro" id="IPR002222">
    <property type="entry name" value="Ribosomal_uS19"/>
</dbReference>
<dbReference type="InterPro" id="IPR005732">
    <property type="entry name" value="Ribosomal_uS19_bac-type"/>
</dbReference>
<dbReference type="InterPro" id="IPR020934">
    <property type="entry name" value="Ribosomal_uS19_CS"/>
</dbReference>
<dbReference type="InterPro" id="IPR023575">
    <property type="entry name" value="Ribosomal_uS19_SF"/>
</dbReference>
<dbReference type="NCBIfam" id="TIGR01050">
    <property type="entry name" value="rpsS_bact"/>
    <property type="match status" value="1"/>
</dbReference>
<dbReference type="PANTHER" id="PTHR11880">
    <property type="entry name" value="RIBOSOMAL PROTEIN S19P FAMILY MEMBER"/>
    <property type="match status" value="1"/>
</dbReference>
<dbReference type="PANTHER" id="PTHR11880:SF8">
    <property type="entry name" value="SMALL RIBOSOMAL SUBUNIT PROTEIN US19M"/>
    <property type="match status" value="1"/>
</dbReference>
<dbReference type="Pfam" id="PF00203">
    <property type="entry name" value="Ribosomal_S19"/>
    <property type="match status" value="1"/>
</dbReference>
<dbReference type="PIRSF" id="PIRSF002144">
    <property type="entry name" value="Ribosomal_S19"/>
    <property type="match status" value="1"/>
</dbReference>
<dbReference type="PRINTS" id="PR00975">
    <property type="entry name" value="RIBOSOMALS19"/>
</dbReference>
<dbReference type="SUPFAM" id="SSF54570">
    <property type="entry name" value="Ribosomal protein S19"/>
    <property type="match status" value="1"/>
</dbReference>
<dbReference type="PROSITE" id="PS00323">
    <property type="entry name" value="RIBOSOMAL_S19"/>
    <property type="match status" value="1"/>
</dbReference>
<proteinExistence type="inferred from homology"/>
<gene>
    <name evidence="1" type="primary">rpsS</name>
    <name type="ordered locus">BUsg_501</name>
</gene>
<organism>
    <name type="scientific">Buchnera aphidicola subsp. Schizaphis graminum (strain Sg)</name>
    <dbReference type="NCBI Taxonomy" id="198804"/>
    <lineage>
        <taxon>Bacteria</taxon>
        <taxon>Pseudomonadati</taxon>
        <taxon>Pseudomonadota</taxon>
        <taxon>Gammaproteobacteria</taxon>
        <taxon>Enterobacterales</taxon>
        <taxon>Erwiniaceae</taxon>
        <taxon>Buchnera</taxon>
    </lineage>
</organism>
<keyword id="KW-0687">Ribonucleoprotein</keyword>
<keyword id="KW-0689">Ribosomal protein</keyword>
<keyword id="KW-0694">RNA-binding</keyword>
<keyword id="KW-0699">rRNA-binding</keyword>